<keyword id="KW-1185">Reference proteome</keyword>
<keyword id="KW-0687">Ribonucleoprotein</keyword>
<keyword id="KW-0689">Ribosomal protein</keyword>
<keyword id="KW-0694">RNA-binding</keyword>
<keyword id="KW-0699">rRNA-binding</keyword>
<keyword id="KW-0820">tRNA-binding</keyword>
<protein>
    <recommendedName>
        <fullName evidence="1">Large ribosomal subunit protein uL16</fullName>
    </recommendedName>
    <alternativeName>
        <fullName evidence="2">50S ribosomal protein L16</fullName>
    </alternativeName>
</protein>
<comment type="function">
    <text evidence="1">Binds 23S rRNA and is also seen to make contacts with the A and possibly P site tRNAs.</text>
</comment>
<comment type="subunit">
    <text evidence="1">Part of the 50S ribosomal subunit.</text>
</comment>
<comment type="similarity">
    <text evidence="1">Belongs to the universal ribosomal protein uL16 family.</text>
</comment>
<sequence>MLQPKRTKFRKMHKGRNRGLAQGTDVSFGSFGLKAVGRGRLTARQIEAARRAMTRAVKRQGKIWIRVFPDKPITEKPLAVRMGKGKGNVEYWVALIQPGKVLYEMDGVPEELAREAFKLAAAKLPIKTTFVTKTVM</sequence>
<proteinExistence type="inferred from homology"/>
<evidence type="ECO:0000255" key="1">
    <source>
        <dbReference type="HAMAP-Rule" id="MF_01342"/>
    </source>
</evidence>
<evidence type="ECO:0000305" key="2"/>
<feature type="chain" id="PRO_1000166357" description="Large ribosomal subunit protein uL16">
    <location>
        <begin position="1"/>
        <end position="136"/>
    </location>
</feature>
<name>RL16_ECO27</name>
<organism>
    <name type="scientific">Escherichia coli O127:H6 (strain E2348/69 / EPEC)</name>
    <dbReference type="NCBI Taxonomy" id="574521"/>
    <lineage>
        <taxon>Bacteria</taxon>
        <taxon>Pseudomonadati</taxon>
        <taxon>Pseudomonadota</taxon>
        <taxon>Gammaproteobacteria</taxon>
        <taxon>Enterobacterales</taxon>
        <taxon>Enterobacteriaceae</taxon>
        <taxon>Escherichia</taxon>
    </lineage>
</organism>
<gene>
    <name evidence="1" type="primary">rplP</name>
    <name type="ordered locus">E2348C_3576</name>
</gene>
<accession>B7UK37</accession>
<dbReference type="EMBL" id="FM180568">
    <property type="protein sequence ID" value="CAS11124.1"/>
    <property type="molecule type" value="Genomic_DNA"/>
</dbReference>
<dbReference type="RefSeq" id="WP_000941212.1">
    <property type="nucleotide sequence ID" value="NC_011601.1"/>
</dbReference>
<dbReference type="SMR" id="B7UK37"/>
<dbReference type="GeneID" id="93778674"/>
<dbReference type="KEGG" id="ecg:E2348C_3576"/>
<dbReference type="HOGENOM" id="CLU_078858_2_1_6"/>
<dbReference type="Proteomes" id="UP000008205">
    <property type="component" value="Chromosome"/>
</dbReference>
<dbReference type="GO" id="GO:0022625">
    <property type="term" value="C:cytosolic large ribosomal subunit"/>
    <property type="evidence" value="ECO:0007669"/>
    <property type="project" value="TreeGrafter"/>
</dbReference>
<dbReference type="GO" id="GO:0019843">
    <property type="term" value="F:rRNA binding"/>
    <property type="evidence" value="ECO:0007669"/>
    <property type="project" value="UniProtKB-UniRule"/>
</dbReference>
<dbReference type="GO" id="GO:0003735">
    <property type="term" value="F:structural constituent of ribosome"/>
    <property type="evidence" value="ECO:0007669"/>
    <property type="project" value="InterPro"/>
</dbReference>
<dbReference type="GO" id="GO:0000049">
    <property type="term" value="F:tRNA binding"/>
    <property type="evidence" value="ECO:0007669"/>
    <property type="project" value="UniProtKB-KW"/>
</dbReference>
<dbReference type="GO" id="GO:0006412">
    <property type="term" value="P:translation"/>
    <property type="evidence" value="ECO:0007669"/>
    <property type="project" value="UniProtKB-UniRule"/>
</dbReference>
<dbReference type="CDD" id="cd01433">
    <property type="entry name" value="Ribosomal_L16_L10e"/>
    <property type="match status" value="1"/>
</dbReference>
<dbReference type="FunFam" id="3.90.1170.10:FF:000001">
    <property type="entry name" value="50S ribosomal protein L16"/>
    <property type="match status" value="1"/>
</dbReference>
<dbReference type="Gene3D" id="3.90.1170.10">
    <property type="entry name" value="Ribosomal protein L10e/L16"/>
    <property type="match status" value="1"/>
</dbReference>
<dbReference type="HAMAP" id="MF_01342">
    <property type="entry name" value="Ribosomal_uL16"/>
    <property type="match status" value="1"/>
</dbReference>
<dbReference type="InterPro" id="IPR047873">
    <property type="entry name" value="Ribosomal_uL16"/>
</dbReference>
<dbReference type="InterPro" id="IPR000114">
    <property type="entry name" value="Ribosomal_uL16_bact-type"/>
</dbReference>
<dbReference type="InterPro" id="IPR020798">
    <property type="entry name" value="Ribosomal_uL16_CS"/>
</dbReference>
<dbReference type="InterPro" id="IPR016180">
    <property type="entry name" value="Ribosomal_uL16_dom"/>
</dbReference>
<dbReference type="InterPro" id="IPR036920">
    <property type="entry name" value="Ribosomal_uL16_sf"/>
</dbReference>
<dbReference type="NCBIfam" id="TIGR01164">
    <property type="entry name" value="rplP_bact"/>
    <property type="match status" value="1"/>
</dbReference>
<dbReference type="PANTHER" id="PTHR12220">
    <property type="entry name" value="50S/60S RIBOSOMAL PROTEIN L16"/>
    <property type="match status" value="1"/>
</dbReference>
<dbReference type="PANTHER" id="PTHR12220:SF13">
    <property type="entry name" value="LARGE RIBOSOMAL SUBUNIT PROTEIN UL16M"/>
    <property type="match status" value="1"/>
</dbReference>
<dbReference type="Pfam" id="PF00252">
    <property type="entry name" value="Ribosomal_L16"/>
    <property type="match status" value="1"/>
</dbReference>
<dbReference type="PRINTS" id="PR00060">
    <property type="entry name" value="RIBOSOMALL16"/>
</dbReference>
<dbReference type="SUPFAM" id="SSF54686">
    <property type="entry name" value="Ribosomal protein L16p/L10e"/>
    <property type="match status" value="1"/>
</dbReference>
<dbReference type="PROSITE" id="PS00586">
    <property type="entry name" value="RIBOSOMAL_L16_1"/>
    <property type="match status" value="1"/>
</dbReference>
<dbReference type="PROSITE" id="PS00701">
    <property type="entry name" value="RIBOSOMAL_L16_2"/>
    <property type="match status" value="1"/>
</dbReference>
<reference key="1">
    <citation type="journal article" date="2009" name="J. Bacteriol.">
        <title>Complete genome sequence and comparative genome analysis of enteropathogenic Escherichia coli O127:H6 strain E2348/69.</title>
        <authorList>
            <person name="Iguchi A."/>
            <person name="Thomson N.R."/>
            <person name="Ogura Y."/>
            <person name="Saunders D."/>
            <person name="Ooka T."/>
            <person name="Henderson I.R."/>
            <person name="Harris D."/>
            <person name="Asadulghani M."/>
            <person name="Kurokawa K."/>
            <person name="Dean P."/>
            <person name="Kenny B."/>
            <person name="Quail M.A."/>
            <person name="Thurston S."/>
            <person name="Dougan G."/>
            <person name="Hayashi T."/>
            <person name="Parkhill J."/>
            <person name="Frankel G."/>
        </authorList>
    </citation>
    <scope>NUCLEOTIDE SEQUENCE [LARGE SCALE GENOMIC DNA]</scope>
    <source>
        <strain>E2348/69 / EPEC</strain>
    </source>
</reference>